<accession>P84837</accession>
<comment type="function">
    <text evidence="3">Gating modifier of Kv2.1/KCNB1 channels.</text>
</comment>
<comment type="subcellular location">
    <subcellularLocation>
        <location evidence="3">Secreted</location>
    </subcellularLocation>
</comment>
<comment type="tissue specificity">
    <text evidence="3">Expressed by the venom gland.</text>
</comment>
<comment type="domain">
    <text evidence="1">The presence of a 'disulfide through disulfide knot' structurally defines this protein as a knottin.</text>
</comment>
<comment type="mass spectrometry"/>
<comment type="similarity">
    <text evidence="5">Belongs to the neurotoxin 10 (Hwtx-1) family. 28 (Jztx-11) subfamily.</text>
</comment>
<sequence>ECRKMFGGCSVDSDCCAHLGCKPTLKYCAWDGT</sequence>
<protein>
    <recommendedName>
        <fullName>Kappa-theraphotoxin-Pg2a</fullName>
        <shortName>Kappa-TRTX-Pg2a</shortName>
    </recommendedName>
    <alternativeName>
        <fullName evidence="4">Guangxitoxin-2</fullName>
        <shortName evidence="4">GxTX-2</shortName>
    </alternativeName>
</protein>
<name>TXG2_CHIGU</name>
<feature type="peptide" id="PRO_0000233919" description="Kappa-theraphotoxin-Pg2a">
    <location>
        <begin position="1"/>
        <end position="33"/>
    </location>
</feature>
<feature type="disulfide bond" evidence="2">
    <location>
        <begin position="2"/>
        <end position="16"/>
    </location>
</feature>
<feature type="disulfide bond" evidence="2">
    <location>
        <begin position="9"/>
        <end position="21"/>
    </location>
</feature>
<feature type="disulfide bond" evidence="2">
    <location>
        <begin position="15"/>
        <end position="28"/>
    </location>
</feature>
<organism>
    <name type="scientific">Chilobrachys guangxiensis</name>
    <name type="common">Chinese earth tiger tarantula</name>
    <name type="synonym">Chilobrachys jingzhao</name>
    <dbReference type="NCBI Taxonomy" id="278060"/>
    <lineage>
        <taxon>Eukaryota</taxon>
        <taxon>Metazoa</taxon>
        <taxon>Ecdysozoa</taxon>
        <taxon>Arthropoda</taxon>
        <taxon>Chelicerata</taxon>
        <taxon>Arachnida</taxon>
        <taxon>Araneae</taxon>
        <taxon>Mygalomorphae</taxon>
        <taxon>Theraphosidae</taxon>
        <taxon>Chilobrachys</taxon>
    </lineage>
</organism>
<proteinExistence type="evidence at protein level"/>
<keyword id="KW-0903">Direct protein sequencing</keyword>
<keyword id="KW-1015">Disulfide bond</keyword>
<keyword id="KW-0872">Ion channel impairing toxin</keyword>
<keyword id="KW-0960">Knottin</keyword>
<keyword id="KW-0632">Potassium channel impairing toxin</keyword>
<keyword id="KW-0964">Secreted</keyword>
<keyword id="KW-0800">Toxin</keyword>
<keyword id="KW-1220">Voltage-gated potassium channel impairing toxin</keyword>
<dbReference type="SMR" id="P84837"/>
<dbReference type="ArachnoServer" id="AS000324">
    <property type="toxin name" value="kappa-theraphotoxin-Pg2a"/>
</dbReference>
<dbReference type="GO" id="GO:0005576">
    <property type="term" value="C:extracellular region"/>
    <property type="evidence" value="ECO:0007669"/>
    <property type="project" value="UniProtKB-SubCell"/>
</dbReference>
<dbReference type="GO" id="GO:0008200">
    <property type="term" value="F:ion channel inhibitor activity"/>
    <property type="evidence" value="ECO:0007669"/>
    <property type="project" value="InterPro"/>
</dbReference>
<dbReference type="GO" id="GO:0015459">
    <property type="term" value="F:potassium channel regulator activity"/>
    <property type="evidence" value="ECO:0007669"/>
    <property type="project" value="UniProtKB-KW"/>
</dbReference>
<dbReference type="GO" id="GO:0090729">
    <property type="term" value="F:toxin activity"/>
    <property type="evidence" value="ECO:0007669"/>
    <property type="project" value="UniProtKB-KW"/>
</dbReference>
<dbReference type="InterPro" id="IPR011696">
    <property type="entry name" value="Huwentoxin-1"/>
</dbReference>
<dbReference type="Pfam" id="PF07740">
    <property type="entry name" value="Toxin_12"/>
    <property type="match status" value="1"/>
</dbReference>
<dbReference type="SUPFAM" id="SSF57059">
    <property type="entry name" value="omega toxin-like"/>
    <property type="match status" value="1"/>
</dbReference>
<reference key="1">
    <citation type="journal article" date="2006" name="Diabetes">
        <title>Blockers of the delayed-rectifier potassium current in pancreatic beta-cells enhance glucose-dependent insulin secretion.</title>
        <authorList>
            <person name="Herrington J."/>
            <person name="Zhou Y.-P."/>
            <person name="Bugianesi R.M."/>
            <person name="Dulski P.M."/>
            <person name="Feng Y."/>
            <person name="Warren V.A."/>
            <person name="Smith M.M."/>
            <person name="Kohler M.G."/>
            <person name="Garsky V.M."/>
            <person name="Sanchez M."/>
            <person name="Wagner M."/>
            <person name="Raphaelli K."/>
            <person name="Banerjee P."/>
            <person name="Ahaghotu C."/>
            <person name="Wunderler D."/>
            <person name="Priest B.T."/>
            <person name="Mehl J.T."/>
            <person name="Garcia M.L."/>
            <person name="McManus O.B."/>
            <person name="Kaczorowski G.J."/>
            <person name="Slaughter R.S."/>
        </authorList>
    </citation>
    <scope>PROTEIN SEQUENCE</scope>
    <scope>FUNCTION</scope>
    <scope>SUBCELLULAR LOCATION</scope>
    <scope>TISSUE SPECIFICITY</scope>
    <scope>MASS SPECTROMETRY</scope>
    <source>
        <tissue>Venom</tissue>
    </source>
</reference>
<reference key="2">
    <citation type="journal article" date="2006" name="Diabetes">
        <authorList>
            <person name="Herrington J."/>
            <person name="Zhou Y.-P."/>
            <person name="Bugianesi R.M."/>
            <person name="Dulski P.M."/>
            <person name="Feng Y."/>
            <person name="Warren V.A."/>
            <person name="Smith M.M."/>
            <person name="Kohler M.G."/>
            <person name="Garsky V.M."/>
            <person name="Sanchez M."/>
            <person name="Wagner M."/>
            <person name="Raphaelli K."/>
            <person name="Banerjee P."/>
            <person name="Ahaghotu C."/>
            <person name="Wunderler D."/>
            <person name="Priest B.T."/>
            <person name="Mehl J.T."/>
            <person name="Garcia M.L."/>
            <person name="McManus O.B."/>
            <person name="Kaczorowski G.J."/>
            <person name="Slaughter R.S."/>
        </authorList>
    </citation>
    <scope>ERRATUM OF PUBMED:16567526</scope>
</reference>
<evidence type="ECO:0000250" key="1"/>
<evidence type="ECO:0000250" key="2">
    <source>
        <dbReference type="UniProtKB" id="P56855"/>
    </source>
</evidence>
<evidence type="ECO:0000269" key="3">
    <source>
    </source>
</evidence>
<evidence type="ECO:0000303" key="4">
    <source>
    </source>
</evidence>
<evidence type="ECO:0000305" key="5"/>